<sequence>MAITQERKNQLINEFKTHESDTGSPEVQIAILTDSINNLNEHLRTHKKDHHSRRGLLKMVGKRRNLLTYLRNKDVTRYRELINKLGLRR</sequence>
<feature type="initiator methionine" description="Removed" evidence="4">
    <location>
        <position position="1"/>
    </location>
</feature>
<feature type="chain" id="PRO_0000115381" description="Small ribosomal subunit protein uS15">
    <location>
        <begin position="2"/>
        <end position="89"/>
    </location>
</feature>
<feature type="region of interest" description="Disordered" evidence="2">
    <location>
        <begin position="1"/>
        <end position="24"/>
    </location>
</feature>
<feature type="compositionally biased region" description="Basic and acidic residues" evidence="2">
    <location>
        <begin position="1"/>
        <end position="21"/>
    </location>
</feature>
<feature type="sequence conflict" description="In Ref. 3; AA sequence." evidence="5" ref="3">
    <original>SINN</original>
    <variation>BIBS</variation>
    <location>
        <begin position="35"/>
        <end position="38"/>
    </location>
</feature>
<feature type="helix" evidence="8">
    <location>
        <begin position="5"/>
        <end position="15"/>
    </location>
</feature>
<feature type="strand" evidence="8">
    <location>
        <begin position="17"/>
        <end position="20"/>
    </location>
</feature>
<feature type="helix" evidence="8">
    <location>
        <begin position="25"/>
        <end position="45"/>
    </location>
</feature>
<feature type="helix" evidence="8">
    <location>
        <begin position="50"/>
        <end position="73"/>
    </location>
</feature>
<feature type="helix" evidence="8">
    <location>
        <begin position="75"/>
        <end position="85"/>
    </location>
</feature>
<organism>
    <name type="scientific">Bacillus subtilis (strain 168)</name>
    <dbReference type="NCBI Taxonomy" id="224308"/>
    <lineage>
        <taxon>Bacteria</taxon>
        <taxon>Bacillati</taxon>
        <taxon>Bacillota</taxon>
        <taxon>Bacilli</taxon>
        <taxon>Bacillales</taxon>
        <taxon>Bacillaceae</taxon>
        <taxon>Bacillus</taxon>
    </lineage>
</organism>
<gene>
    <name evidence="1" type="primary">rpsO</name>
    <name type="ordered locus">BSU16680</name>
</gene>
<keyword id="KW-0002">3D-structure</keyword>
<keyword id="KW-0903">Direct protein sequencing</keyword>
<keyword id="KW-1185">Reference proteome</keyword>
<keyword id="KW-0687">Ribonucleoprotein</keyword>
<keyword id="KW-0689">Ribosomal protein</keyword>
<keyword id="KW-0694">RNA-binding</keyword>
<keyword id="KW-0699">rRNA-binding</keyword>
<name>RS15_BACSU</name>
<evidence type="ECO:0000255" key="1">
    <source>
        <dbReference type="HAMAP-Rule" id="MF_01343"/>
    </source>
</evidence>
<evidence type="ECO:0000256" key="2">
    <source>
        <dbReference type="SAM" id="MobiDB-lite"/>
    </source>
</evidence>
<evidence type="ECO:0000269" key="3">
    <source>
    </source>
</evidence>
<evidence type="ECO:0000269" key="4">
    <source>
    </source>
</evidence>
<evidence type="ECO:0000305" key="5"/>
<evidence type="ECO:0007744" key="6">
    <source>
        <dbReference type="PDB" id="6HA1"/>
    </source>
</evidence>
<evidence type="ECO:0007744" key="7">
    <source>
        <dbReference type="PDB" id="6HA8"/>
    </source>
</evidence>
<evidence type="ECO:0007829" key="8">
    <source>
        <dbReference type="PDB" id="8CDU"/>
    </source>
</evidence>
<comment type="function">
    <text evidence="1">One of the primary rRNA binding proteins, it binds directly to 16S rRNA where it helps nucleate assembly of the platform of the 30S subunit by binding and bridging several RNA helices of the 16S rRNA.</text>
</comment>
<comment type="function">
    <text evidence="1">Forms an intersubunit bridge (bridge B4) with the 23S rRNA of the 50S subunit in the ribosome.</text>
</comment>
<comment type="subunit">
    <text evidence="1 3">Part of the 30S ribosomal subunit (PubMed:30126986). Forms a bridge to the 50S subunit in the 70S ribosome, contacting the 23S rRNA (By similarity).</text>
</comment>
<comment type="similarity">
    <text evidence="1">Belongs to the universal ribosomal protein uS15 family.</text>
</comment>
<dbReference type="EMBL" id="Z80835">
    <property type="protein sequence ID" value="CAB02560.1"/>
    <property type="molecule type" value="Genomic_DNA"/>
</dbReference>
<dbReference type="EMBL" id="AL009126">
    <property type="protein sequence ID" value="CAB13541.1"/>
    <property type="molecule type" value="Genomic_DNA"/>
</dbReference>
<dbReference type="EMBL" id="U29668">
    <property type="protein sequence ID" value="AAC43594.1"/>
    <property type="molecule type" value="Genomic_DNA"/>
</dbReference>
<dbReference type="PIR" id="F69700">
    <property type="entry name" value="F69700"/>
</dbReference>
<dbReference type="RefSeq" id="NP_389550.1">
    <property type="nucleotide sequence ID" value="NC_000964.3"/>
</dbReference>
<dbReference type="RefSeq" id="WP_003220957.1">
    <property type="nucleotide sequence ID" value="NZ_OZ025638.1"/>
</dbReference>
<dbReference type="PDB" id="3J9W">
    <property type="method" value="EM"/>
    <property type="resolution" value="3.90 A"/>
    <property type="chains" value="AO=1-89"/>
</dbReference>
<dbReference type="PDB" id="5NJT">
    <property type="method" value="EM"/>
    <property type="resolution" value="3.80 A"/>
    <property type="chains" value="O=2-89"/>
</dbReference>
<dbReference type="PDB" id="6HA1">
    <property type="method" value="EM"/>
    <property type="resolution" value="3.10 A"/>
    <property type="chains" value="o=1-89"/>
</dbReference>
<dbReference type="PDB" id="6HA8">
    <property type="method" value="EM"/>
    <property type="resolution" value="3.50 A"/>
    <property type="chains" value="o=1-89"/>
</dbReference>
<dbReference type="PDB" id="6HTQ">
    <property type="method" value="EM"/>
    <property type="resolution" value="4.50 A"/>
    <property type="chains" value="o=4-88"/>
</dbReference>
<dbReference type="PDB" id="7O5B">
    <property type="method" value="EM"/>
    <property type="resolution" value="3.33 A"/>
    <property type="chains" value="O=1-89"/>
</dbReference>
<dbReference type="PDB" id="7QGU">
    <property type="method" value="EM"/>
    <property type="resolution" value="4.75 A"/>
    <property type="chains" value="t=1-89"/>
</dbReference>
<dbReference type="PDB" id="7QH4">
    <property type="method" value="EM"/>
    <property type="resolution" value="5.45 A"/>
    <property type="chains" value="s=1-89"/>
</dbReference>
<dbReference type="PDB" id="7QV1">
    <property type="method" value="EM"/>
    <property type="resolution" value="3.50 A"/>
    <property type="chains" value="o=1-89"/>
</dbReference>
<dbReference type="PDB" id="7QV2">
    <property type="method" value="EM"/>
    <property type="resolution" value="3.50 A"/>
    <property type="chains" value="o=1-89"/>
</dbReference>
<dbReference type="PDB" id="7QV3">
    <property type="method" value="EM"/>
    <property type="resolution" value="5.14 A"/>
    <property type="chains" value="o=1-89"/>
</dbReference>
<dbReference type="PDB" id="8BUU">
    <property type="method" value="EM"/>
    <property type="resolution" value="2.90 A"/>
    <property type="chains" value="o=1-89"/>
</dbReference>
<dbReference type="PDB" id="8CDU">
    <property type="method" value="EM"/>
    <property type="resolution" value="3.10 A"/>
    <property type="chains" value="O=1-89"/>
</dbReference>
<dbReference type="PDB" id="8CDV">
    <property type="method" value="EM"/>
    <property type="resolution" value="4.73 A"/>
    <property type="chains" value="O=1-89"/>
</dbReference>
<dbReference type="PDB" id="8CEC">
    <property type="method" value="EM"/>
    <property type="resolution" value="3.57 A"/>
    <property type="chains" value="O=1-89"/>
</dbReference>
<dbReference type="PDB" id="8CED">
    <property type="method" value="EM"/>
    <property type="resolution" value="4.15 A"/>
    <property type="chains" value="O=1-89"/>
</dbReference>
<dbReference type="PDB" id="8CEE">
    <property type="method" value="EM"/>
    <property type="resolution" value="3.70 A"/>
    <property type="chains" value="O=1-89"/>
</dbReference>
<dbReference type="PDB" id="8QCQ">
    <property type="method" value="EM"/>
    <property type="resolution" value="2.30 A"/>
    <property type="chains" value="o=1-89"/>
</dbReference>
<dbReference type="PDB" id="8QPP">
    <property type="method" value="EM"/>
    <property type="resolution" value="3.40 A"/>
    <property type="chains" value="O=1-89"/>
</dbReference>
<dbReference type="PDB" id="8R55">
    <property type="method" value="EM"/>
    <property type="resolution" value="3.57 A"/>
    <property type="chains" value="O=1-89"/>
</dbReference>
<dbReference type="PDBsum" id="3J9W"/>
<dbReference type="PDBsum" id="5NJT"/>
<dbReference type="PDBsum" id="6HA1"/>
<dbReference type="PDBsum" id="6HA8"/>
<dbReference type="PDBsum" id="6HTQ"/>
<dbReference type="PDBsum" id="7O5B"/>
<dbReference type="PDBsum" id="7QGU"/>
<dbReference type="PDBsum" id="7QH4"/>
<dbReference type="PDBsum" id="7QV1"/>
<dbReference type="PDBsum" id="7QV2"/>
<dbReference type="PDBsum" id="7QV3"/>
<dbReference type="PDBsum" id="8BUU"/>
<dbReference type="PDBsum" id="8CDU"/>
<dbReference type="PDBsum" id="8CDV"/>
<dbReference type="PDBsum" id="8CEC"/>
<dbReference type="PDBsum" id="8CED"/>
<dbReference type="PDBsum" id="8CEE"/>
<dbReference type="PDBsum" id="8QCQ"/>
<dbReference type="PDBsum" id="8QPP"/>
<dbReference type="PDBsum" id="8R55"/>
<dbReference type="EMDB" id="EMD-0176"/>
<dbReference type="EMDB" id="EMD-0177"/>
<dbReference type="EMDB" id="EMD-0270"/>
<dbReference type="EMDB" id="EMD-12734"/>
<dbReference type="EMDB" id="EMD-14157"/>
<dbReference type="EMDB" id="EMD-14158"/>
<dbReference type="EMDB" id="EMD-14159"/>
<dbReference type="EMDB" id="EMD-16246"/>
<dbReference type="EMDB" id="EMD-16595"/>
<dbReference type="EMDB" id="EMD-16596"/>
<dbReference type="EMDB" id="EMD-16605"/>
<dbReference type="EMDB" id="EMD-16606"/>
<dbReference type="EMDB" id="EMD-16607"/>
<dbReference type="EMDB" id="EMD-18332"/>
<dbReference type="EMDB" id="EMD-3656"/>
<dbReference type="SMR" id="P21473"/>
<dbReference type="FunCoup" id="P21473">
    <property type="interactions" value="478"/>
</dbReference>
<dbReference type="STRING" id="224308.BSU16680"/>
<dbReference type="jPOST" id="P21473"/>
<dbReference type="PaxDb" id="224308-BSU16680"/>
<dbReference type="EnsemblBacteria" id="CAB13541">
    <property type="protein sequence ID" value="CAB13541"/>
    <property type="gene ID" value="BSU_16680"/>
</dbReference>
<dbReference type="GeneID" id="92789730"/>
<dbReference type="GeneID" id="938814"/>
<dbReference type="KEGG" id="bsu:BSU16680"/>
<dbReference type="PATRIC" id="fig|224308.179.peg.1809"/>
<dbReference type="eggNOG" id="COG0184">
    <property type="taxonomic scope" value="Bacteria"/>
</dbReference>
<dbReference type="InParanoid" id="P21473"/>
<dbReference type="OrthoDB" id="9799262at2"/>
<dbReference type="PhylomeDB" id="P21473"/>
<dbReference type="BioCyc" id="BSUB:BSU16680-MONOMER"/>
<dbReference type="Proteomes" id="UP000001570">
    <property type="component" value="Chromosome"/>
</dbReference>
<dbReference type="GO" id="GO:0022627">
    <property type="term" value="C:cytosolic small ribosomal subunit"/>
    <property type="evidence" value="ECO:0000318"/>
    <property type="project" value="GO_Central"/>
</dbReference>
<dbReference type="GO" id="GO:0019843">
    <property type="term" value="F:rRNA binding"/>
    <property type="evidence" value="ECO:0007669"/>
    <property type="project" value="UniProtKB-UniRule"/>
</dbReference>
<dbReference type="GO" id="GO:0003735">
    <property type="term" value="F:structural constituent of ribosome"/>
    <property type="evidence" value="ECO:0007669"/>
    <property type="project" value="InterPro"/>
</dbReference>
<dbReference type="GO" id="GO:0006412">
    <property type="term" value="P:translation"/>
    <property type="evidence" value="ECO:0007669"/>
    <property type="project" value="UniProtKB-UniRule"/>
</dbReference>
<dbReference type="CDD" id="cd00353">
    <property type="entry name" value="Ribosomal_S15p_S13e"/>
    <property type="match status" value="1"/>
</dbReference>
<dbReference type="FunFam" id="1.10.287.10:FF:000002">
    <property type="entry name" value="30S ribosomal protein S15"/>
    <property type="match status" value="1"/>
</dbReference>
<dbReference type="Gene3D" id="6.10.250.3130">
    <property type="match status" value="1"/>
</dbReference>
<dbReference type="Gene3D" id="1.10.287.10">
    <property type="entry name" value="S15/NS1, RNA-binding"/>
    <property type="match status" value="1"/>
</dbReference>
<dbReference type="HAMAP" id="MF_01343_B">
    <property type="entry name" value="Ribosomal_uS15_B"/>
    <property type="match status" value="1"/>
</dbReference>
<dbReference type="InterPro" id="IPR000589">
    <property type="entry name" value="Ribosomal_uS15"/>
</dbReference>
<dbReference type="InterPro" id="IPR005290">
    <property type="entry name" value="Ribosomal_uS15_bac-type"/>
</dbReference>
<dbReference type="InterPro" id="IPR009068">
    <property type="entry name" value="uS15_NS1_RNA-bd_sf"/>
</dbReference>
<dbReference type="NCBIfam" id="TIGR00952">
    <property type="entry name" value="S15_bact"/>
    <property type="match status" value="1"/>
</dbReference>
<dbReference type="PANTHER" id="PTHR23321">
    <property type="entry name" value="RIBOSOMAL PROTEIN S15, BACTERIAL AND ORGANELLAR"/>
    <property type="match status" value="1"/>
</dbReference>
<dbReference type="PANTHER" id="PTHR23321:SF26">
    <property type="entry name" value="SMALL RIBOSOMAL SUBUNIT PROTEIN US15M"/>
    <property type="match status" value="1"/>
</dbReference>
<dbReference type="Pfam" id="PF00312">
    <property type="entry name" value="Ribosomal_S15"/>
    <property type="match status" value="1"/>
</dbReference>
<dbReference type="SMART" id="SM01387">
    <property type="entry name" value="Ribosomal_S15"/>
    <property type="match status" value="1"/>
</dbReference>
<dbReference type="SUPFAM" id="SSF47060">
    <property type="entry name" value="S15/NS1 RNA-binding domain"/>
    <property type="match status" value="1"/>
</dbReference>
<dbReference type="PROSITE" id="PS00362">
    <property type="entry name" value="RIBOSOMAL_S15"/>
    <property type="match status" value="1"/>
</dbReference>
<proteinExistence type="evidence at protein level"/>
<reference key="1">
    <citation type="journal article" date="1997" name="Mol. Gen. Genet.">
        <title>Molecular cloning and characterisation of the ribC gene from Bacillus subtilis: a point mutation in ribC results in riboflavin overproduction.</title>
        <authorList>
            <person name="Coquard D."/>
            <person name="Huecas M."/>
            <person name="Ott M."/>
            <person name="van Dijl J.M."/>
            <person name="van Loon A.P."/>
            <person name="Hohmann H.P."/>
        </authorList>
    </citation>
    <scope>NUCLEOTIDE SEQUENCE [GENOMIC DNA]</scope>
    <source>
        <strain>168</strain>
    </source>
</reference>
<reference key="2">
    <citation type="journal article" date="1997" name="Nature">
        <title>The complete genome sequence of the Gram-positive bacterium Bacillus subtilis.</title>
        <authorList>
            <person name="Kunst F."/>
            <person name="Ogasawara N."/>
            <person name="Moszer I."/>
            <person name="Albertini A.M."/>
            <person name="Alloni G."/>
            <person name="Azevedo V."/>
            <person name="Bertero M.G."/>
            <person name="Bessieres P."/>
            <person name="Bolotin A."/>
            <person name="Borchert S."/>
            <person name="Borriss R."/>
            <person name="Boursier L."/>
            <person name="Brans A."/>
            <person name="Braun M."/>
            <person name="Brignell S.C."/>
            <person name="Bron S."/>
            <person name="Brouillet S."/>
            <person name="Bruschi C.V."/>
            <person name="Caldwell B."/>
            <person name="Capuano V."/>
            <person name="Carter N.M."/>
            <person name="Choi S.-K."/>
            <person name="Codani J.-J."/>
            <person name="Connerton I.F."/>
            <person name="Cummings N.J."/>
            <person name="Daniel R.A."/>
            <person name="Denizot F."/>
            <person name="Devine K.M."/>
            <person name="Duesterhoeft A."/>
            <person name="Ehrlich S.D."/>
            <person name="Emmerson P.T."/>
            <person name="Entian K.-D."/>
            <person name="Errington J."/>
            <person name="Fabret C."/>
            <person name="Ferrari E."/>
            <person name="Foulger D."/>
            <person name="Fritz C."/>
            <person name="Fujita M."/>
            <person name="Fujita Y."/>
            <person name="Fuma S."/>
            <person name="Galizzi A."/>
            <person name="Galleron N."/>
            <person name="Ghim S.-Y."/>
            <person name="Glaser P."/>
            <person name="Goffeau A."/>
            <person name="Golightly E.J."/>
            <person name="Grandi G."/>
            <person name="Guiseppi G."/>
            <person name="Guy B.J."/>
            <person name="Haga K."/>
            <person name="Haiech J."/>
            <person name="Harwood C.R."/>
            <person name="Henaut A."/>
            <person name="Hilbert H."/>
            <person name="Holsappel S."/>
            <person name="Hosono S."/>
            <person name="Hullo M.-F."/>
            <person name="Itaya M."/>
            <person name="Jones L.-M."/>
            <person name="Joris B."/>
            <person name="Karamata D."/>
            <person name="Kasahara Y."/>
            <person name="Klaerr-Blanchard M."/>
            <person name="Klein C."/>
            <person name="Kobayashi Y."/>
            <person name="Koetter P."/>
            <person name="Koningstein G."/>
            <person name="Krogh S."/>
            <person name="Kumano M."/>
            <person name="Kurita K."/>
            <person name="Lapidus A."/>
            <person name="Lardinois S."/>
            <person name="Lauber J."/>
            <person name="Lazarevic V."/>
            <person name="Lee S.-M."/>
            <person name="Levine A."/>
            <person name="Liu H."/>
            <person name="Masuda S."/>
            <person name="Mauel C."/>
            <person name="Medigue C."/>
            <person name="Medina N."/>
            <person name="Mellado R.P."/>
            <person name="Mizuno M."/>
            <person name="Moestl D."/>
            <person name="Nakai S."/>
            <person name="Noback M."/>
            <person name="Noone D."/>
            <person name="O'Reilly M."/>
            <person name="Ogawa K."/>
            <person name="Ogiwara A."/>
            <person name="Oudega B."/>
            <person name="Park S.-H."/>
            <person name="Parro V."/>
            <person name="Pohl T.M."/>
            <person name="Portetelle D."/>
            <person name="Porwollik S."/>
            <person name="Prescott A.M."/>
            <person name="Presecan E."/>
            <person name="Pujic P."/>
            <person name="Purnelle B."/>
            <person name="Rapoport G."/>
            <person name="Rey M."/>
            <person name="Reynolds S."/>
            <person name="Rieger M."/>
            <person name="Rivolta C."/>
            <person name="Rocha E."/>
            <person name="Roche B."/>
            <person name="Rose M."/>
            <person name="Sadaie Y."/>
            <person name="Sato T."/>
            <person name="Scanlan E."/>
            <person name="Schleich S."/>
            <person name="Schroeter R."/>
            <person name="Scoffone F."/>
            <person name="Sekiguchi J."/>
            <person name="Sekowska A."/>
            <person name="Seror S.J."/>
            <person name="Serror P."/>
            <person name="Shin B.-S."/>
            <person name="Soldo B."/>
            <person name="Sorokin A."/>
            <person name="Tacconi E."/>
            <person name="Takagi T."/>
            <person name="Takahashi H."/>
            <person name="Takemaru K."/>
            <person name="Takeuchi M."/>
            <person name="Tamakoshi A."/>
            <person name="Tanaka T."/>
            <person name="Terpstra P."/>
            <person name="Tognoni A."/>
            <person name="Tosato V."/>
            <person name="Uchiyama S."/>
            <person name="Vandenbol M."/>
            <person name="Vannier F."/>
            <person name="Vassarotti A."/>
            <person name="Viari A."/>
            <person name="Wambutt R."/>
            <person name="Wedler E."/>
            <person name="Wedler H."/>
            <person name="Weitzenegger T."/>
            <person name="Winters P."/>
            <person name="Wipat A."/>
            <person name="Yamamoto H."/>
            <person name="Yamane K."/>
            <person name="Yasumoto K."/>
            <person name="Yata K."/>
            <person name="Yoshida K."/>
            <person name="Yoshikawa H.-F."/>
            <person name="Zumstein E."/>
            <person name="Yoshikawa H."/>
            <person name="Danchin A."/>
        </authorList>
    </citation>
    <scope>NUCLEOTIDE SEQUENCE [LARGE SCALE GENOMIC DNA]</scope>
    <source>
        <strain>168</strain>
    </source>
</reference>
<reference key="3">
    <citation type="journal article" date="1982" name="Mol. Gen. Genet.">
        <title>Purification and characterization of 30S ribosomal proteins from Bacillus subtilis: correlation to Escherichia coli 30S proteins.</title>
        <authorList>
            <person name="Higo K."/>
            <person name="Otaka E."/>
            <person name="Osawa S."/>
        </authorList>
    </citation>
    <scope>PROTEIN SEQUENCE OF 2-38</scope>
</reference>
<reference key="4">
    <citation type="journal article" date="1996" name="Mol. Microbiol.">
        <title>Polynucleotide phosphorylase is necessary for competence development in Bacillus subtilis.</title>
        <authorList>
            <person name="Luttinger A."/>
            <person name="Hahn J."/>
            <person name="Dubnau D."/>
        </authorList>
    </citation>
    <scope>NUCLEOTIDE SEQUENCE [GENOMIC DNA] OF 75-89</scope>
</reference>
<reference evidence="6 7" key="5">
    <citation type="journal article" date="2018" name="Proc. Natl. Acad. Sci. U.S.A.">
        <title>Structural basis for antibiotic resistance mediated by the Bacillus subtilis ABCF ATPase VmlR.</title>
        <authorList>
            <person name="Crowe-McAuliffe C."/>
            <person name="Graf M."/>
            <person name="Huter P."/>
            <person name="Takada H."/>
            <person name="Abdelshahid M."/>
            <person name="Novacek J."/>
            <person name="Murina V."/>
            <person name="Atkinson G.C."/>
            <person name="Hauryliuk V."/>
            <person name="Wilson D.N."/>
        </authorList>
    </citation>
    <scope>STRUCTURE BY ELECTRON MICROSCOPY (3.10 ANGSTROMS) OF 1-89 WITH AND WITHOUT VIRGINIAMYCIN M</scope>
    <scope>SUBUNIT</scope>
</reference>
<accession>P21473</accession>
<accession>P70988</accession>
<protein>
    <recommendedName>
        <fullName evidence="1">Small ribosomal subunit protein uS15</fullName>
    </recommendedName>
    <alternativeName>
        <fullName evidence="5">30S ribosomal protein S15</fullName>
    </alternativeName>
    <alternativeName>
        <fullName>BS18</fullName>
    </alternativeName>
</protein>